<organism>
    <name type="scientific">Pectobacterium carotovorum subsp. carotovorum (strain PC1)</name>
    <dbReference type="NCBI Taxonomy" id="561230"/>
    <lineage>
        <taxon>Bacteria</taxon>
        <taxon>Pseudomonadati</taxon>
        <taxon>Pseudomonadota</taxon>
        <taxon>Gammaproteobacteria</taxon>
        <taxon>Enterobacterales</taxon>
        <taxon>Pectobacteriaceae</taxon>
        <taxon>Pectobacterium</taxon>
    </lineage>
</organism>
<comment type="function">
    <text evidence="1">One of several proteins that assist in the late maturation steps of the functional core of the 30S ribosomal subunit. Helps release RbfA from mature subunits. May play a role in the assembly of ribosomal proteins into the subunit. Circularly permuted GTPase that catalyzes slow GTP hydrolysis, GTPase activity is stimulated by the 30S ribosomal subunit.</text>
</comment>
<comment type="cofactor">
    <cofactor evidence="1">
        <name>Zn(2+)</name>
        <dbReference type="ChEBI" id="CHEBI:29105"/>
    </cofactor>
    <text evidence="1">Binds 1 zinc ion per subunit.</text>
</comment>
<comment type="subunit">
    <text evidence="1">Monomer. Associates with 30S ribosomal subunit, binds 16S rRNA.</text>
</comment>
<comment type="subcellular location">
    <subcellularLocation>
        <location evidence="1">Cytoplasm</location>
    </subcellularLocation>
</comment>
<comment type="similarity">
    <text evidence="1">Belongs to the TRAFAC class YlqF/YawG GTPase family. RsgA subfamily.</text>
</comment>
<proteinExistence type="inferred from homology"/>
<evidence type="ECO:0000255" key="1">
    <source>
        <dbReference type="HAMAP-Rule" id="MF_01820"/>
    </source>
</evidence>
<evidence type="ECO:0000255" key="2">
    <source>
        <dbReference type="PROSITE-ProRule" id="PRU01058"/>
    </source>
</evidence>
<evidence type="ECO:0000256" key="3">
    <source>
        <dbReference type="SAM" id="MobiDB-lite"/>
    </source>
</evidence>
<accession>C6DFN0</accession>
<dbReference type="EC" id="3.6.1.-" evidence="1"/>
<dbReference type="EMBL" id="CP001657">
    <property type="protein sequence ID" value="ACT14769.1"/>
    <property type="molecule type" value="Genomic_DNA"/>
</dbReference>
<dbReference type="RefSeq" id="WP_015841880.1">
    <property type="nucleotide sequence ID" value="NC_012917.1"/>
</dbReference>
<dbReference type="SMR" id="C6DFN0"/>
<dbReference type="STRING" id="561230.PC1_3754"/>
<dbReference type="GeneID" id="67792355"/>
<dbReference type="KEGG" id="pct:PC1_3754"/>
<dbReference type="eggNOG" id="COG1162">
    <property type="taxonomic scope" value="Bacteria"/>
</dbReference>
<dbReference type="HOGENOM" id="CLU_033617_2_0_6"/>
<dbReference type="OrthoDB" id="9809485at2"/>
<dbReference type="Proteomes" id="UP000002736">
    <property type="component" value="Chromosome"/>
</dbReference>
<dbReference type="GO" id="GO:0005737">
    <property type="term" value="C:cytoplasm"/>
    <property type="evidence" value="ECO:0007669"/>
    <property type="project" value="UniProtKB-SubCell"/>
</dbReference>
<dbReference type="GO" id="GO:0005525">
    <property type="term" value="F:GTP binding"/>
    <property type="evidence" value="ECO:0007669"/>
    <property type="project" value="UniProtKB-UniRule"/>
</dbReference>
<dbReference type="GO" id="GO:0003924">
    <property type="term" value="F:GTPase activity"/>
    <property type="evidence" value="ECO:0007669"/>
    <property type="project" value="UniProtKB-UniRule"/>
</dbReference>
<dbReference type="GO" id="GO:0046872">
    <property type="term" value="F:metal ion binding"/>
    <property type="evidence" value="ECO:0007669"/>
    <property type="project" value="UniProtKB-KW"/>
</dbReference>
<dbReference type="GO" id="GO:0019843">
    <property type="term" value="F:rRNA binding"/>
    <property type="evidence" value="ECO:0007669"/>
    <property type="project" value="UniProtKB-KW"/>
</dbReference>
<dbReference type="GO" id="GO:0042274">
    <property type="term" value="P:ribosomal small subunit biogenesis"/>
    <property type="evidence" value="ECO:0007669"/>
    <property type="project" value="UniProtKB-UniRule"/>
</dbReference>
<dbReference type="CDD" id="cd01854">
    <property type="entry name" value="YjeQ_EngC"/>
    <property type="match status" value="1"/>
</dbReference>
<dbReference type="Gene3D" id="2.40.50.140">
    <property type="entry name" value="Nucleic acid-binding proteins"/>
    <property type="match status" value="1"/>
</dbReference>
<dbReference type="Gene3D" id="3.40.50.300">
    <property type="entry name" value="P-loop containing nucleotide triphosphate hydrolases"/>
    <property type="match status" value="1"/>
</dbReference>
<dbReference type="Gene3D" id="1.10.40.50">
    <property type="entry name" value="Probable gtpase engc, domain 3"/>
    <property type="match status" value="1"/>
</dbReference>
<dbReference type="HAMAP" id="MF_01820">
    <property type="entry name" value="GTPase_RsgA"/>
    <property type="match status" value="1"/>
</dbReference>
<dbReference type="InterPro" id="IPR030378">
    <property type="entry name" value="G_CP_dom"/>
</dbReference>
<dbReference type="InterPro" id="IPR012340">
    <property type="entry name" value="NA-bd_OB-fold"/>
</dbReference>
<dbReference type="InterPro" id="IPR027417">
    <property type="entry name" value="P-loop_NTPase"/>
</dbReference>
<dbReference type="InterPro" id="IPR004881">
    <property type="entry name" value="Ribosome_biogen_GTPase_RsgA"/>
</dbReference>
<dbReference type="InterPro" id="IPR010914">
    <property type="entry name" value="RsgA_GTPase_dom"/>
</dbReference>
<dbReference type="NCBIfam" id="NF008931">
    <property type="entry name" value="PRK12288.1"/>
    <property type="match status" value="1"/>
</dbReference>
<dbReference type="NCBIfam" id="TIGR00157">
    <property type="entry name" value="ribosome small subunit-dependent GTPase A"/>
    <property type="match status" value="1"/>
</dbReference>
<dbReference type="PANTHER" id="PTHR32120">
    <property type="entry name" value="SMALL RIBOSOMAL SUBUNIT BIOGENESIS GTPASE RSGA"/>
    <property type="match status" value="1"/>
</dbReference>
<dbReference type="PANTHER" id="PTHR32120:SF11">
    <property type="entry name" value="SMALL RIBOSOMAL SUBUNIT BIOGENESIS GTPASE RSGA 1, MITOCHONDRIAL-RELATED"/>
    <property type="match status" value="1"/>
</dbReference>
<dbReference type="Pfam" id="PF03193">
    <property type="entry name" value="RsgA_GTPase"/>
    <property type="match status" value="1"/>
</dbReference>
<dbReference type="SUPFAM" id="SSF52540">
    <property type="entry name" value="P-loop containing nucleoside triphosphate hydrolases"/>
    <property type="match status" value="1"/>
</dbReference>
<dbReference type="PROSITE" id="PS50936">
    <property type="entry name" value="ENGC_GTPASE"/>
    <property type="match status" value="1"/>
</dbReference>
<dbReference type="PROSITE" id="PS51721">
    <property type="entry name" value="G_CP"/>
    <property type="match status" value="1"/>
</dbReference>
<protein>
    <recommendedName>
        <fullName evidence="1">Small ribosomal subunit biogenesis GTPase RsgA</fullName>
        <ecNumber evidence="1">3.6.1.-</ecNumber>
    </recommendedName>
</protein>
<reference key="1">
    <citation type="submission" date="2009-07" db="EMBL/GenBank/DDBJ databases">
        <title>Complete sequence of Pectobacterium carotovorum subsp. carotovorum PC1.</title>
        <authorList>
            <consortium name="US DOE Joint Genome Institute"/>
            <person name="Lucas S."/>
            <person name="Copeland A."/>
            <person name="Lapidus A."/>
            <person name="Glavina del Rio T."/>
            <person name="Tice H."/>
            <person name="Bruce D."/>
            <person name="Goodwin L."/>
            <person name="Pitluck S."/>
            <person name="Munk A.C."/>
            <person name="Brettin T."/>
            <person name="Detter J.C."/>
            <person name="Han C."/>
            <person name="Tapia R."/>
            <person name="Larimer F."/>
            <person name="Land M."/>
            <person name="Hauser L."/>
            <person name="Kyrpides N."/>
            <person name="Mikhailova N."/>
            <person name="Balakrishnan V."/>
            <person name="Glasner J."/>
            <person name="Perna N.T."/>
        </authorList>
    </citation>
    <scope>NUCLEOTIDE SEQUENCE [LARGE SCALE GENOMIC DNA]</scope>
    <source>
        <strain>PC1</strain>
    </source>
</reference>
<sequence>MSKKKLSKGQQRRVSANHQRRLKKTESKVEWEDSQLGDAQEGIIISRFGMHADVEATDGVVHRCNIRRTLSSLVTGDRVVWRPGHESLAGISGIVEAVHPRHSVLTRPDYYDGIKPIAANIDQIVIVSAILPELSLNIIDRYLVACETLEIEPLIVLNKIDLLDDESRQFVDKLMDIYRALNYRVLMVSSHTQQGIPELEQALTDRISIFAGQSGVGKSSLLNALLALDEERILVNEVSDNSGLGQHTTTASRLYHFPHGGDVIDSPGVREFGLWHLEPEQVTRGFIELRQYIGSCKFRDCKHENDPGCAINAALDRGEIAVERYDNYHRILESMAQVKTRKGFSDTDN</sequence>
<gene>
    <name evidence="1" type="primary">rsgA</name>
    <name type="ordered locus">PC1_3754</name>
</gene>
<keyword id="KW-0963">Cytoplasm</keyword>
<keyword id="KW-0342">GTP-binding</keyword>
<keyword id="KW-0378">Hydrolase</keyword>
<keyword id="KW-0479">Metal-binding</keyword>
<keyword id="KW-0547">Nucleotide-binding</keyword>
<keyword id="KW-0690">Ribosome biogenesis</keyword>
<keyword id="KW-0694">RNA-binding</keyword>
<keyword id="KW-0699">rRNA-binding</keyword>
<keyword id="KW-0862">Zinc</keyword>
<feature type="chain" id="PRO_1000216047" description="Small ribosomal subunit biogenesis GTPase RsgA">
    <location>
        <begin position="1"/>
        <end position="349"/>
    </location>
</feature>
<feature type="domain" description="CP-type G" evidence="2">
    <location>
        <begin position="102"/>
        <end position="272"/>
    </location>
</feature>
<feature type="region of interest" description="Disordered" evidence="3">
    <location>
        <begin position="1"/>
        <end position="29"/>
    </location>
</feature>
<feature type="compositionally biased region" description="Basic residues" evidence="3">
    <location>
        <begin position="1"/>
        <end position="11"/>
    </location>
</feature>
<feature type="binding site" evidence="1">
    <location>
        <begin position="158"/>
        <end position="161"/>
    </location>
    <ligand>
        <name>GTP</name>
        <dbReference type="ChEBI" id="CHEBI:37565"/>
    </ligand>
</feature>
<feature type="binding site" evidence="1">
    <location>
        <begin position="212"/>
        <end position="220"/>
    </location>
    <ligand>
        <name>GTP</name>
        <dbReference type="ChEBI" id="CHEBI:37565"/>
    </ligand>
</feature>
<feature type="binding site" evidence="1">
    <location>
        <position position="296"/>
    </location>
    <ligand>
        <name>Zn(2+)</name>
        <dbReference type="ChEBI" id="CHEBI:29105"/>
    </ligand>
</feature>
<feature type="binding site" evidence="1">
    <location>
        <position position="301"/>
    </location>
    <ligand>
        <name>Zn(2+)</name>
        <dbReference type="ChEBI" id="CHEBI:29105"/>
    </ligand>
</feature>
<feature type="binding site" evidence="1">
    <location>
        <position position="303"/>
    </location>
    <ligand>
        <name>Zn(2+)</name>
        <dbReference type="ChEBI" id="CHEBI:29105"/>
    </ligand>
</feature>
<feature type="binding site" evidence="1">
    <location>
        <position position="309"/>
    </location>
    <ligand>
        <name>Zn(2+)</name>
        <dbReference type="ChEBI" id="CHEBI:29105"/>
    </ligand>
</feature>
<name>RSGA_PECCP</name>